<dbReference type="EMBL" id="BC091195">
    <property type="protein sequence ID" value="AAH91195.1"/>
    <property type="molecule type" value="mRNA"/>
</dbReference>
<dbReference type="RefSeq" id="NP_001020179.1">
    <property type="nucleotide sequence ID" value="NM_001025008.1"/>
</dbReference>
<dbReference type="RefSeq" id="XP_008763731.1">
    <property type="nucleotide sequence ID" value="XM_008765509.3"/>
</dbReference>
<dbReference type="SMR" id="Q5BK60"/>
<dbReference type="FunCoup" id="Q5BK60">
    <property type="interactions" value="30"/>
</dbReference>
<dbReference type="STRING" id="10116.ENSRNOP00000074080"/>
<dbReference type="PhosphoSitePlus" id="Q5BK60"/>
<dbReference type="PaxDb" id="10116-ENSRNOP00000010484"/>
<dbReference type="Ensembl" id="ENSRNOT00000010484.6">
    <property type="protein sequence ID" value="ENSRNOP00000010484.5"/>
    <property type="gene ID" value="ENSRNOG00000007896.7"/>
</dbReference>
<dbReference type="GeneID" id="314996"/>
<dbReference type="KEGG" id="rno:314996"/>
<dbReference type="UCSC" id="RGD:1564169">
    <property type="organism name" value="rat"/>
</dbReference>
<dbReference type="AGR" id="RGD:1564169"/>
<dbReference type="CTD" id="340359"/>
<dbReference type="RGD" id="1564169">
    <property type="gene designation" value="Klhl38"/>
</dbReference>
<dbReference type="eggNOG" id="KOG4441">
    <property type="taxonomic scope" value="Eukaryota"/>
</dbReference>
<dbReference type="GeneTree" id="ENSGT00940000157647"/>
<dbReference type="InParanoid" id="Q5BK60"/>
<dbReference type="OMA" id="EVALTCF"/>
<dbReference type="OrthoDB" id="36049at9989"/>
<dbReference type="PhylomeDB" id="Q5BK60"/>
<dbReference type="TreeFam" id="TF329218"/>
<dbReference type="PRO" id="PR:Q5BK60"/>
<dbReference type="Proteomes" id="UP000002494">
    <property type="component" value="Chromosome 7"/>
</dbReference>
<dbReference type="Bgee" id="ENSRNOG00000007896">
    <property type="expression patterns" value="Expressed in skeletal muscle tissue and 10 other cell types or tissues"/>
</dbReference>
<dbReference type="GO" id="GO:0031463">
    <property type="term" value="C:Cul3-RING ubiquitin ligase complex"/>
    <property type="evidence" value="ECO:0000318"/>
    <property type="project" value="GO_Central"/>
</dbReference>
<dbReference type="GO" id="GO:0005737">
    <property type="term" value="C:cytoplasm"/>
    <property type="evidence" value="ECO:0000318"/>
    <property type="project" value="GO_Central"/>
</dbReference>
<dbReference type="GO" id="GO:1990756">
    <property type="term" value="F:ubiquitin-like ligase-substrate adaptor activity"/>
    <property type="evidence" value="ECO:0000318"/>
    <property type="project" value="GO_Central"/>
</dbReference>
<dbReference type="GO" id="GO:0043161">
    <property type="term" value="P:proteasome-mediated ubiquitin-dependent protein catabolic process"/>
    <property type="evidence" value="ECO:0000318"/>
    <property type="project" value="GO_Central"/>
</dbReference>
<dbReference type="CDD" id="cd18476">
    <property type="entry name" value="BACK_KLHL38"/>
    <property type="match status" value="1"/>
</dbReference>
<dbReference type="FunFam" id="1.25.40.420:FF:000001">
    <property type="entry name" value="Kelch-like family member 12"/>
    <property type="match status" value="1"/>
</dbReference>
<dbReference type="Gene3D" id="1.25.40.420">
    <property type="match status" value="1"/>
</dbReference>
<dbReference type="Gene3D" id="2.120.10.80">
    <property type="entry name" value="Kelch-type beta propeller"/>
    <property type="match status" value="2"/>
</dbReference>
<dbReference type="Gene3D" id="3.30.710.10">
    <property type="entry name" value="Potassium Channel Kv1.1, Chain A"/>
    <property type="match status" value="1"/>
</dbReference>
<dbReference type="InterPro" id="IPR011705">
    <property type="entry name" value="BACK"/>
</dbReference>
<dbReference type="InterPro" id="IPR056737">
    <property type="entry name" value="Beta-prop_ATRN-MKLN-like"/>
</dbReference>
<dbReference type="InterPro" id="IPR017096">
    <property type="entry name" value="BTB-kelch_protein"/>
</dbReference>
<dbReference type="InterPro" id="IPR000210">
    <property type="entry name" value="BTB/POZ_dom"/>
</dbReference>
<dbReference type="InterPro" id="IPR015915">
    <property type="entry name" value="Kelch-typ_b-propeller"/>
</dbReference>
<dbReference type="InterPro" id="IPR006652">
    <property type="entry name" value="Kelch_1"/>
</dbReference>
<dbReference type="InterPro" id="IPR030568">
    <property type="entry name" value="KLHL38_BACK"/>
</dbReference>
<dbReference type="InterPro" id="IPR011333">
    <property type="entry name" value="SKP1/BTB/POZ_sf"/>
</dbReference>
<dbReference type="PANTHER" id="PTHR45632:SF3">
    <property type="entry name" value="KELCH-LIKE PROTEIN 32"/>
    <property type="match status" value="1"/>
</dbReference>
<dbReference type="PANTHER" id="PTHR45632">
    <property type="entry name" value="LD33804P"/>
    <property type="match status" value="1"/>
</dbReference>
<dbReference type="Pfam" id="PF07707">
    <property type="entry name" value="BACK"/>
    <property type="match status" value="1"/>
</dbReference>
<dbReference type="Pfam" id="PF24981">
    <property type="entry name" value="Beta-prop_ATRN-LZTR1"/>
    <property type="match status" value="1"/>
</dbReference>
<dbReference type="Pfam" id="PF00651">
    <property type="entry name" value="BTB"/>
    <property type="match status" value="1"/>
</dbReference>
<dbReference type="Pfam" id="PF01344">
    <property type="entry name" value="Kelch_1"/>
    <property type="match status" value="1"/>
</dbReference>
<dbReference type="PIRSF" id="PIRSF037037">
    <property type="entry name" value="Kelch-like_protein_gigaxonin"/>
    <property type="match status" value="1"/>
</dbReference>
<dbReference type="SMART" id="SM00875">
    <property type="entry name" value="BACK"/>
    <property type="match status" value="1"/>
</dbReference>
<dbReference type="SMART" id="SM00225">
    <property type="entry name" value="BTB"/>
    <property type="match status" value="1"/>
</dbReference>
<dbReference type="SMART" id="SM00612">
    <property type="entry name" value="Kelch"/>
    <property type="match status" value="5"/>
</dbReference>
<dbReference type="SUPFAM" id="SSF117281">
    <property type="entry name" value="Kelch motif"/>
    <property type="match status" value="1"/>
</dbReference>
<dbReference type="SUPFAM" id="SSF54695">
    <property type="entry name" value="POZ domain"/>
    <property type="match status" value="1"/>
</dbReference>
<dbReference type="PROSITE" id="PS50097">
    <property type="entry name" value="BTB"/>
    <property type="match status" value="1"/>
</dbReference>
<organism>
    <name type="scientific">Rattus norvegicus</name>
    <name type="common">Rat</name>
    <dbReference type="NCBI Taxonomy" id="10116"/>
    <lineage>
        <taxon>Eukaryota</taxon>
        <taxon>Metazoa</taxon>
        <taxon>Chordata</taxon>
        <taxon>Craniata</taxon>
        <taxon>Vertebrata</taxon>
        <taxon>Euteleostomi</taxon>
        <taxon>Mammalia</taxon>
        <taxon>Eutheria</taxon>
        <taxon>Euarchontoglires</taxon>
        <taxon>Glires</taxon>
        <taxon>Rodentia</taxon>
        <taxon>Myomorpha</taxon>
        <taxon>Muroidea</taxon>
        <taxon>Muridae</taxon>
        <taxon>Murinae</taxon>
        <taxon>Rattus</taxon>
    </lineage>
</organism>
<reference key="1">
    <citation type="journal article" date="2004" name="Genome Res.">
        <title>The status, quality, and expansion of the NIH full-length cDNA project: the Mammalian Gene Collection (MGC).</title>
        <authorList>
            <consortium name="The MGC Project Team"/>
        </authorList>
    </citation>
    <scope>NUCLEOTIDE SEQUENCE [LARGE SCALE MRNA]</scope>
    <source>
        <tissue>Spleen</tissue>
    </source>
</reference>
<protein>
    <recommendedName>
        <fullName>Kelch-like protein 38</fullName>
    </recommendedName>
</protein>
<keyword id="KW-0880">Kelch repeat</keyword>
<keyword id="KW-1185">Reference proteome</keyword>
<keyword id="KW-0677">Repeat</keyword>
<feature type="chain" id="PRO_0000325811" description="Kelch-like protein 38">
    <location>
        <begin position="1"/>
        <end position="580"/>
    </location>
</feature>
<feature type="domain" description="BTB" evidence="1">
    <location>
        <begin position="34"/>
        <end position="101"/>
    </location>
</feature>
<feature type="domain" description="BACK">
    <location>
        <begin position="136"/>
        <end position="237"/>
    </location>
</feature>
<feature type="repeat" description="Kelch 1">
    <location>
        <begin position="284"/>
        <end position="331"/>
    </location>
</feature>
<feature type="repeat" description="Kelch 2">
    <location>
        <begin position="333"/>
        <end position="382"/>
    </location>
</feature>
<feature type="repeat" description="Kelch 3">
    <location>
        <begin position="383"/>
        <end position="430"/>
    </location>
</feature>
<feature type="repeat" description="Kelch 4">
    <location>
        <begin position="432"/>
        <end position="478"/>
    </location>
</feature>
<feature type="repeat" description="Kelch 5">
    <location>
        <begin position="479"/>
        <end position="520"/>
    </location>
</feature>
<feature type="repeat" description="Kelch 6">
    <location>
        <begin position="522"/>
        <end position="572"/>
    </location>
</feature>
<accession>Q5BK60</accession>
<gene>
    <name type="primary">Klhl38</name>
</gene>
<name>KLH38_RAT</name>
<sequence>MDEELPDAVVFKDQNFSSDLLRQLNGLRQSKILTDVSICSGACEVPCHRNVLASSSPYFRAMFCSHFRESREAKVQLKGISSTTLEQVIAYVYTGEVHISAANVLPLMEAAAMLQYPRMFEACSSYLQSQLAPSNCLGLVRLAEILSCDSLKKKAREVALTYFPEVAASADLKELCVMELRDYLGDDKLCGEEEKVFEALMAWVKHDLQARWRYMQELLQQVRLQYIHPAFFHHFIASDALLQSSPACQAILEMAKKQIFSLYGPSAQDCKLWHTPPRSSYQDFLLLLGGRKDNQQTTRDVLLYSIQTGQWQSLAKLPTRLYKASAVTLHRSVYVLGGMAVREGKGLISCSVYIFSMKLNQWRMGEPMLAARYSHRSTTHRNFIFSIGGTGEGQELLGSMERYDSIRDVWESMADMPMAVLHPAVAVKDQRLYLFGGEDIMQNPVRLIQVYHISRNTWYKMETRMIKNVCAPAVVLGEKIIIVGGYTRRILAYDPQSNKFVKCADMKDRRMHHGATVMGNKLYVTGGRRLTTDCNIEDSASFDCYDPETDTWTSQGQLPHTLFDHACLTLQCIPHMTSLS</sequence>
<proteinExistence type="evidence at transcript level"/>
<evidence type="ECO:0000255" key="1">
    <source>
        <dbReference type="PROSITE-ProRule" id="PRU00037"/>
    </source>
</evidence>